<feature type="chain" id="PRO_0000237304" description="DNA-directed RNA polymerase subunit beta">
    <location>
        <begin position="1"/>
        <end position="1141"/>
    </location>
</feature>
<feature type="region of interest" description="Disordered" evidence="2">
    <location>
        <begin position="1063"/>
        <end position="1141"/>
    </location>
</feature>
<feature type="compositionally biased region" description="Acidic residues" evidence="2">
    <location>
        <begin position="1063"/>
        <end position="1074"/>
    </location>
</feature>
<feature type="compositionally biased region" description="Acidic residues" evidence="2">
    <location>
        <begin position="1096"/>
        <end position="1141"/>
    </location>
</feature>
<name>RPOB_MOOTA</name>
<sequence length="1141" mass="127977">MAYPVKVGARERWTFAKIKETLELPNLIEIQRNSYQWFIDTGLRELFHDISPIQDFTGNLILQFVDYSLGEPKYSEDECKERDMTYAAPLRVKVRLINRETGEVKEQEVFMGDFPLMTDKGTFIINGAERVIVSQLVRSPGAYYAEGIDASGTKVYGATVIPNRGAWLEFETDNTESIYVRIDRTRKIPVTILLRALGYNTNARILELFDYDGRIQNTLEKDNTESEEEALVEIYKRLRPGEPPTVDSARNLLESLFFDPRRYDLGNVGRYKLHKKFNHGILTREVDGREEYIRTLTKEDIIYTIKYLLRLMDGEVKPDDIDHLGNRRLRSVGELLQNQFRIGLARMERVVRERMTIQDVDVITPQVLINIRPVVAAIKEFFGSSQLSQFMDQTNPLAELTHKRRLSALGPGGLSRERAGFEVRDVHTSHYGRMCPIETPEGPNIGLIGSLSTYARINEFGFIETPYRRVDKEKGIVTNQVDYLTADEEDKYFIAQANAPLDEEGHFLEKRVNARHGGEILVVPASQVDYMDVSPKQMVSVATALIPFLEHDDANRALMGANMQRQAVPLLRTEAPIVGTGMEWRAARDSGTVVLARNNGVVERVTAREIVIRTDNGHLETYRLQKFVRSNQGTCINQKPIVRKGERVSAGQTIADGPSTDQGELALGRNILVAFMTWEGYNYEDAILISEKLVKDDIFTSIHIEEYECDARDTKLGPEEITRDIPNVSEDVLKDLDERGIIRIGAEVRPGDILVGKVTPKGETELTAEERLLRAIFGEKAREVRDTSLRVPHGESGIVVDVKVFSRENGDELAPGVNELVRVYIAQKRKISVGDKMAGRHGNKGVISRILPEEDMPFLPDGTPIEIVLNPLGVPSRMNLGQILETHLGRAARALGITVATPVFDGATEEEIKEAFRKAGLPEDGKTILYDGRTGEPFDRPITVGYMYMLKLAHLVDDKIHARSTGPYSLVTQQPLGGKAQFGGQRFGEMEVWALEAYGAAYTLQEILTVKSDDVVGRVKTYEAIVKGENVPEPGVPESFKVLIKELQSLGLDVKVLSEENEEIEIKEDDDDVSESAQELGLDVHGQPNTAPESEGGNEEDKEAEADEDFDPADLDPSELELDADLNDDLVVPDEAYGDEE</sequence>
<accession>Q2RFN9</accession>
<organism>
    <name type="scientific">Moorella thermoacetica (strain ATCC 39073 / JCM 9320)</name>
    <dbReference type="NCBI Taxonomy" id="264732"/>
    <lineage>
        <taxon>Bacteria</taxon>
        <taxon>Bacillati</taxon>
        <taxon>Bacillota</taxon>
        <taxon>Clostridia</taxon>
        <taxon>Moorellales</taxon>
        <taxon>Moorellaceae</taxon>
        <taxon>Moorella</taxon>
    </lineage>
</organism>
<reference key="1">
    <citation type="journal article" date="2008" name="Environ. Microbiol.">
        <title>The complete genome sequence of Moorella thermoacetica (f. Clostridium thermoaceticum).</title>
        <authorList>
            <person name="Pierce E."/>
            <person name="Xie G."/>
            <person name="Barabote R.D."/>
            <person name="Saunders E."/>
            <person name="Han C.S."/>
            <person name="Detter J.C."/>
            <person name="Richardson P."/>
            <person name="Brettin T.S."/>
            <person name="Das A."/>
            <person name="Ljungdahl L.G."/>
            <person name="Ragsdale S.W."/>
        </authorList>
    </citation>
    <scope>NUCLEOTIDE SEQUENCE [LARGE SCALE GENOMIC DNA]</scope>
    <source>
        <strain>ATCC 39073 / JCM 9320</strain>
    </source>
</reference>
<gene>
    <name evidence="1" type="primary">rpoB</name>
    <name type="ordered locus">Moth_2468</name>
</gene>
<comment type="function">
    <text evidence="1">DNA-dependent RNA polymerase catalyzes the transcription of DNA into RNA using the four ribonucleoside triphosphates as substrates.</text>
</comment>
<comment type="catalytic activity">
    <reaction evidence="1">
        <text>RNA(n) + a ribonucleoside 5'-triphosphate = RNA(n+1) + diphosphate</text>
        <dbReference type="Rhea" id="RHEA:21248"/>
        <dbReference type="Rhea" id="RHEA-COMP:14527"/>
        <dbReference type="Rhea" id="RHEA-COMP:17342"/>
        <dbReference type="ChEBI" id="CHEBI:33019"/>
        <dbReference type="ChEBI" id="CHEBI:61557"/>
        <dbReference type="ChEBI" id="CHEBI:140395"/>
        <dbReference type="EC" id="2.7.7.6"/>
    </reaction>
</comment>
<comment type="subunit">
    <text evidence="1">The RNAP catalytic core consists of 2 alpha, 1 beta, 1 beta' and 1 omega subunit. When a sigma factor is associated with the core the holoenzyme is formed, which can initiate transcription.</text>
</comment>
<comment type="similarity">
    <text evidence="1">Belongs to the RNA polymerase beta chain family.</text>
</comment>
<dbReference type="EC" id="2.7.7.6" evidence="1"/>
<dbReference type="EMBL" id="CP000232">
    <property type="protein sequence ID" value="ABC20750.1"/>
    <property type="molecule type" value="Genomic_DNA"/>
</dbReference>
<dbReference type="RefSeq" id="YP_431293.1">
    <property type="nucleotide sequence ID" value="NC_007644.1"/>
</dbReference>
<dbReference type="SMR" id="Q2RFN9"/>
<dbReference type="STRING" id="264732.Moth_2468"/>
<dbReference type="EnsemblBacteria" id="ABC20750">
    <property type="protein sequence ID" value="ABC20750"/>
    <property type="gene ID" value="Moth_2468"/>
</dbReference>
<dbReference type="KEGG" id="mta:Moth_2468"/>
<dbReference type="PATRIC" id="fig|264732.11.peg.2686"/>
<dbReference type="eggNOG" id="COG0085">
    <property type="taxonomic scope" value="Bacteria"/>
</dbReference>
<dbReference type="HOGENOM" id="CLU_000524_4_1_9"/>
<dbReference type="OrthoDB" id="9803954at2"/>
<dbReference type="GO" id="GO:0000428">
    <property type="term" value="C:DNA-directed RNA polymerase complex"/>
    <property type="evidence" value="ECO:0007669"/>
    <property type="project" value="UniProtKB-KW"/>
</dbReference>
<dbReference type="GO" id="GO:0003677">
    <property type="term" value="F:DNA binding"/>
    <property type="evidence" value="ECO:0007669"/>
    <property type="project" value="UniProtKB-UniRule"/>
</dbReference>
<dbReference type="GO" id="GO:0003899">
    <property type="term" value="F:DNA-directed RNA polymerase activity"/>
    <property type="evidence" value="ECO:0007669"/>
    <property type="project" value="UniProtKB-UniRule"/>
</dbReference>
<dbReference type="GO" id="GO:0032549">
    <property type="term" value="F:ribonucleoside binding"/>
    <property type="evidence" value="ECO:0007669"/>
    <property type="project" value="InterPro"/>
</dbReference>
<dbReference type="GO" id="GO:0006351">
    <property type="term" value="P:DNA-templated transcription"/>
    <property type="evidence" value="ECO:0007669"/>
    <property type="project" value="UniProtKB-UniRule"/>
</dbReference>
<dbReference type="CDD" id="cd00653">
    <property type="entry name" value="RNA_pol_B_RPB2"/>
    <property type="match status" value="1"/>
</dbReference>
<dbReference type="FunFam" id="3.90.1800.10:FF:000001">
    <property type="entry name" value="DNA-directed RNA polymerase subunit beta"/>
    <property type="match status" value="1"/>
</dbReference>
<dbReference type="Gene3D" id="2.40.50.100">
    <property type="match status" value="1"/>
</dbReference>
<dbReference type="Gene3D" id="2.40.50.150">
    <property type="match status" value="1"/>
</dbReference>
<dbReference type="Gene3D" id="3.90.1100.10">
    <property type="match status" value="1"/>
</dbReference>
<dbReference type="Gene3D" id="2.30.150.10">
    <property type="entry name" value="DNA-directed RNA polymerase, beta subunit, external 1 domain"/>
    <property type="match status" value="1"/>
</dbReference>
<dbReference type="Gene3D" id="2.40.270.10">
    <property type="entry name" value="DNA-directed RNA polymerase, subunit 2, domain 6"/>
    <property type="match status" value="2"/>
</dbReference>
<dbReference type="Gene3D" id="3.90.1800.10">
    <property type="entry name" value="RNA polymerase alpha subunit dimerisation domain"/>
    <property type="match status" value="1"/>
</dbReference>
<dbReference type="Gene3D" id="3.90.1110.10">
    <property type="entry name" value="RNA polymerase Rpb2, domain 2"/>
    <property type="match status" value="1"/>
</dbReference>
<dbReference type="HAMAP" id="MF_01321">
    <property type="entry name" value="RNApol_bact_RpoB"/>
    <property type="match status" value="1"/>
</dbReference>
<dbReference type="InterPro" id="IPR042107">
    <property type="entry name" value="DNA-dir_RNA_pol_bsu_ext_1_sf"/>
</dbReference>
<dbReference type="InterPro" id="IPR019462">
    <property type="entry name" value="DNA-dir_RNA_pol_bsu_external_1"/>
</dbReference>
<dbReference type="InterPro" id="IPR015712">
    <property type="entry name" value="DNA-dir_RNA_pol_su2"/>
</dbReference>
<dbReference type="InterPro" id="IPR007120">
    <property type="entry name" value="DNA-dir_RNAP_su2_dom"/>
</dbReference>
<dbReference type="InterPro" id="IPR037033">
    <property type="entry name" value="DNA-dir_RNAP_su2_hyb_sf"/>
</dbReference>
<dbReference type="InterPro" id="IPR010243">
    <property type="entry name" value="RNA_pol_bsu_bac"/>
</dbReference>
<dbReference type="InterPro" id="IPR007121">
    <property type="entry name" value="RNA_pol_bsu_CS"/>
</dbReference>
<dbReference type="InterPro" id="IPR007644">
    <property type="entry name" value="RNA_pol_bsu_protrusion"/>
</dbReference>
<dbReference type="InterPro" id="IPR007642">
    <property type="entry name" value="RNA_pol_Rpb2_2"/>
</dbReference>
<dbReference type="InterPro" id="IPR037034">
    <property type="entry name" value="RNA_pol_Rpb2_2_sf"/>
</dbReference>
<dbReference type="InterPro" id="IPR007645">
    <property type="entry name" value="RNA_pol_Rpb2_3"/>
</dbReference>
<dbReference type="InterPro" id="IPR007641">
    <property type="entry name" value="RNA_pol_Rpb2_7"/>
</dbReference>
<dbReference type="InterPro" id="IPR014724">
    <property type="entry name" value="RNA_pol_RPB2_OB-fold"/>
</dbReference>
<dbReference type="NCBIfam" id="NF001616">
    <property type="entry name" value="PRK00405.1"/>
    <property type="match status" value="1"/>
</dbReference>
<dbReference type="NCBIfam" id="TIGR02013">
    <property type="entry name" value="rpoB"/>
    <property type="match status" value="1"/>
</dbReference>
<dbReference type="PANTHER" id="PTHR20856">
    <property type="entry name" value="DNA-DIRECTED RNA POLYMERASE I SUBUNIT 2"/>
    <property type="match status" value="1"/>
</dbReference>
<dbReference type="Pfam" id="PF04563">
    <property type="entry name" value="RNA_pol_Rpb2_1"/>
    <property type="match status" value="1"/>
</dbReference>
<dbReference type="Pfam" id="PF04561">
    <property type="entry name" value="RNA_pol_Rpb2_2"/>
    <property type="match status" value="1"/>
</dbReference>
<dbReference type="Pfam" id="PF04565">
    <property type="entry name" value="RNA_pol_Rpb2_3"/>
    <property type="match status" value="1"/>
</dbReference>
<dbReference type="Pfam" id="PF10385">
    <property type="entry name" value="RNA_pol_Rpb2_45"/>
    <property type="match status" value="1"/>
</dbReference>
<dbReference type="Pfam" id="PF00562">
    <property type="entry name" value="RNA_pol_Rpb2_6"/>
    <property type="match status" value="1"/>
</dbReference>
<dbReference type="Pfam" id="PF04560">
    <property type="entry name" value="RNA_pol_Rpb2_7"/>
    <property type="match status" value="1"/>
</dbReference>
<dbReference type="SUPFAM" id="SSF64484">
    <property type="entry name" value="beta and beta-prime subunits of DNA dependent RNA-polymerase"/>
    <property type="match status" value="1"/>
</dbReference>
<dbReference type="PROSITE" id="PS01166">
    <property type="entry name" value="RNA_POL_BETA"/>
    <property type="match status" value="1"/>
</dbReference>
<protein>
    <recommendedName>
        <fullName evidence="1">DNA-directed RNA polymerase subunit beta</fullName>
        <shortName evidence="1">RNAP subunit beta</shortName>
        <ecNumber evidence="1">2.7.7.6</ecNumber>
    </recommendedName>
    <alternativeName>
        <fullName evidence="1">RNA polymerase subunit beta</fullName>
    </alternativeName>
    <alternativeName>
        <fullName evidence="1">Transcriptase subunit beta</fullName>
    </alternativeName>
</protein>
<proteinExistence type="inferred from homology"/>
<evidence type="ECO:0000255" key="1">
    <source>
        <dbReference type="HAMAP-Rule" id="MF_01321"/>
    </source>
</evidence>
<evidence type="ECO:0000256" key="2">
    <source>
        <dbReference type="SAM" id="MobiDB-lite"/>
    </source>
</evidence>
<keyword id="KW-0240">DNA-directed RNA polymerase</keyword>
<keyword id="KW-0548">Nucleotidyltransferase</keyword>
<keyword id="KW-0804">Transcription</keyword>
<keyword id="KW-0808">Transferase</keyword>